<comment type="function">
    <text>Histones H1 are necessary for the condensation of nucleosome chains into higher-order structures.</text>
</comment>
<comment type="subcellular location">
    <subcellularLocation>
        <location>Nucleus</location>
    </subcellularLocation>
    <subcellularLocation>
        <location>Chromosome</location>
    </subcellularLocation>
</comment>
<comment type="similarity">
    <text evidence="2">Belongs to the histone H1/H5 family.</text>
</comment>
<feature type="initiator methionine" description="Removed" evidence="4">
    <location>
        <position position="1"/>
    </location>
</feature>
<feature type="chain" id="PRO_0000195949" description="Histone H1.1">
    <location>
        <begin position="2"/>
        <end position="274"/>
    </location>
</feature>
<feature type="domain" description="H15" evidence="2">
    <location>
        <begin position="61"/>
        <end position="130"/>
    </location>
</feature>
<feature type="region of interest" description="Disordered" evidence="3">
    <location>
        <begin position="1"/>
        <end position="63"/>
    </location>
</feature>
<feature type="region of interest" description="Disordered" evidence="3">
    <location>
        <begin position="129"/>
        <end position="155"/>
    </location>
</feature>
<feature type="region of interest" description="Disordered" evidence="3">
    <location>
        <begin position="167"/>
        <end position="233"/>
    </location>
</feature>
<feature type="region of interest" description="Disordered" evidence="3">
    <location>
        <begin position="249"/>
        <end position="274"/>
    </location>
</feature>
<feature type="compositionally biased region" description="Low complexity" evidence="3">
    <location>
        <begin position="16"/>
        <end position="25"/>
    </location>
</feature>
<feature type="compositionally biased region" description="Basic and acidic residues" evidence="3">
    <location>
        <begin position="40"/>
        <end position="49"/>
    </location>
</feature>
<feature type="compositionally biased region" description="Low complexity" evidence="3">
    <location>
        <begin position="129"/>
        <end position="145"/>
    </location>
</feature>
<feature type="compositionally biased region" description="Low complexity" evidence="3">
    <location>
        <begin position="175"/>
        <end position="185"/>
    </location>
</feature>
<feature type="compositionally biased region" description="Low complexity" evidence="3">
    <location>
        <begin position="221"/>
        <end position="233"/>
    </location>
</feature>
<feature type="modified residue" description="N-acetylserine" evidence="4">
    <location>
        <position position="2"/>
    </location>
</feature>
<feature type="cross-link" description="Glycyl lysine isopeptide (Lys-Gly) (interchain with G-Cter in ubiquitin)" evidence="1">
    <location>
        <position position="161"/>
    </location>
</feature>
<proteinExistence type="evidence at protein level"/>
<accession>P26568</accession>
<reference key="1">
    <citation type="journal article" date="1991" name="Eur. J. Biochem.">
        <title>Arabidopsis thaliana H1 histones. Analysis of two members of a small gene family.</title>
        <authorList>
            <person name="Gantt J.S."/>
            <person name="Lenvik T.R."/>
        </authorList>
    </citation>
    <scope>NUCLEOTIDE SEQUENCE [GENOMIC DNA / MRNA]</scope>
</reference>
<reference key="2">
    <citation type="journal article" date="2000" name="Nature">
        <title>Sequence and analysis of chromosome 1 of the plant Arabidopsis thaliana.</title>
        <authorList>
            <person name="Theologis A."/>
            <person name="Ecker J.R."/>
            <person name="Palm C.J."/>
            <person name="Federspiel N.A."/>
            <person name="Kaul S."/>
            <person name="White O."/>
            <person name="Alonso J."/>
            <person name="Altafi H."/>
            <person name="Araujo R."/>
            <person name="Bowman C.L."/>
            <person name="Brooks S.Y."/>
            <person name="Buehler E."/>
            <person name="Chan A."/>
            <person name="Chao Q."/>
            <person name="Chen H."/>
            <person name="Cheuk R.F."/>
            <person name="Chin C.W."/>
            <person name="Chung M.K."/>
            <person name="Conn L."/>
            <person name="Conway A.B."/>
            <person name="Conway A.R."/>
            <person name="Creasy T.H."/>
            <person name="Dewar K."/>
            <person name="Dunn P."/>
            <person name="Etgu P."/>
            <person name="Feldblyum T.V."/>
            <person name="Feng J.-D."/>
            <person name="Fong B."/>
            <person name="Fujii C.Y."/>
            <person name="Gill J.E."/>
            <person name="Goldsmith A.D."/>
            <person name="Haas B."/>
            <person name="Hansen N.F."/>
            <person name="Hughes B."/>
            <person name="Huizar L."/>
            <person name="Hunter J.L."/>
            <person name="Jenkins J."/>
            <person name="Johnson-Hopson C."/>
            <person name="Khan S."/>
            <person name="Khaykin E."/>
            <person name="Kim C.J."/>
            <person name="Koo H.L."/>
            <person name="Kremenetskaia I."/>
            <person name="Kurtz D.B."/>
            <person name="Kwan A."/>
            <person name="Lam B."/>
            <person name="Langin-Hooper S."/>
            <person name="Lee A."/>
            <person name="Lee J.M."/>
            <person name="Lenz C.A."/>
            <person name="Li J.H."/>
            <person name="Li Y.-P."/>
            <person name="Lin X."/>
            <person name="Liu S.X."/>
            <person name="Liu Z.A."/>
            <person name="Luros J.S."/>
            <person name="Maiti R."/>
            <person name="Marziali A."/>
            <person name="Militscher J."/>
            <person name="Miranda M."/>
            <person name="Nguyen M."/>
            <person name="Nierman W.C."/>
            <person name="Osborne B.I."/>
            <person name="Pai G."/>
            <person name="Peterson J."/>
            <person name="Pham P.K."/>
            <person name="Rizzo M."/>
            <person name="Rooney T."/>
            <person name="Rowley D."/>
            <person name="Sakano H."/>
            <person name="Salzberg S.L."/>
            <person name="Schwartz J.R."/>
            <person name="Shinn P."/>
            <person name="Southwick A.M."/>
            <person name="Sun H."/>
            <person name="Tallon L.J."/>
            <person name="Tambunga G."/>
            <person name="Toriumi M.J."/>
            <person name="Town C.D."/>
            <person name="Utterback T."/>
            <person name="Van Aken S."/>
            <person name="Vaysberg M."/>
            <person name="Vysotskaia V.S."/>
            <person name="Walker M."/>
            <person name="Wu D."/>
            <person name="Yu G."/>
            <person name="Fraser C.M."/>
            <person name="Venter J.C."/>
            <person name="Davis R.W."/>
        </authorList>
    </citation>
    <scope>NUCLEOTIDE SEQUENCE [LARGE SCALE GENOMIC DNA]</scope>
    <source>
        <strain>cv. Columbia</strain>
    </source>
</reference>
<reference key="3">
    <citation type="journal article" date="2017" name="Plant J.">
        <title>Araport11: a complete reannotation of the Arabidopsis thaliana reference genome.</title>
        <authorList>
            <person name="Cheng C.Y."/>
            <person name="Krishnakumar V."/>
            <person name="Chan A.P."/>
            <person name="Thibaud-Nissen F."/>
            <person name="Schobel S."/>
            <person name="Town C.D."/>
        </authorList>
    </citation>
    <scope>GENOME REANNOTATION</scope>
    <source>
        <strain>cv. Columbia</strain>
    </source>
</reference>
<reference key="4">
    <citation type="journal article" date="2003" name="Science">
        <title>Empirical analysis of transcriptional activity in the Arabidopsis genome.</title>
        <authorList>
            <person name="Yamada K."/>
            <person name="Lim J."/>
            <person name="Dale J.M."/>
            <person name="Chen H."/>
            <person name="Shinn P."/>
            <person name="Palm C.J."/>
            <person name="Southwick A.M."/>
            <person name="Wu H.C."/>
            <person name="Kim C.J."/>
            <person name="Nguyen M."/>
            <person name="Pham P.K."/>
            <person name="Cheuk R.F."/>
            <person name="Karlin-Newmann G."/>
            <person name="Liu S.X."/>
            <person name="Lam B."/>
            <person name="Sakano H."/>
            <person name="Wu T."/>
            <person name="Yu G."/>
            <person name="Miranda M."/>
            <person name="Quach H.L."/>
            <person name="Tripp M."/>
            <person name="Chang C.H."/>
            <person name="Lee J.M."/>
            <person name="Toriumi M.J."/>
            <person name="Chan M.M."/>
            <person name="Tang C.C."/>
            <person name="Onodera C.S."/>
            <person name="Deng J.M."/>
            <person name="Akiyama K."/>
            <person name="Ansari Y."/>
            <person name="Arakawa T."/>
            <person name="Banh J."/>
            <person name="Banno F."/>
            <person name="Bowser L."/>
            <person name="Brooks S.Y."/>
            <person name="Carninci P."/>
            <person name="Chao Q."/>
            <person name="Choy N."/>
            <person name="Enju A."/>
            <person name="Goldsmith A.D."/>
            <person name="Gurjal M."/>
            <person name="Hansen N.F."/>
            <person name="Hayashizaki Y."/>
            <person name="Johnson-Hopson C."/>
            <person name="Hsuan V.W."/>
            <person name="Iida K."/>
            <person name="Karnes M."/>
            <person name="Khan S."/>
            <person name="Koesema E."/>
            <person name="Ishida J."/>
            <person name="Jiang P.X."/>
            <person name="Jones T."/>
            <person name="Kawai J."/>
            <person name="Kamiya A."/>
            <person name="Meyers C."/>
            <person name="Nakajima M."/>
            <person name="Narusaka M."/>
            <person name="Seki M."/>
            <person name="Sakurai T."/>
            <person name="Satou M."/>
            <person name="Tamse R."/>
            <person name="Vaysberg M."/>
            <person name="Wallender E.K."/>
            <person name="Wong C."/>
            <person name="Yamamura Y."/>
            <person name="Yuan S."/>
            <person name="Shinozaki K."/>
            <person name="Davis R.W."/>
            <person name="Theologis A."/>
            <person name="Ecker J.R."/>
        </authorList>
    </citation>
    <scope>NUCLEOTIDE SEQUENCE [LARGE SCALE MRNA]</scope>
    <source>
        <strain>cv. Columbia</strain>
    </source>
</reference>
<reference key="5">
    <citation type="submission" date="2002-03" db="EMBL/GenBank/DDBJ databases">
        <title>Full-length cDNA from Arabidopsis thaliana.</title>
        <authorList>
            <person name="Brover V.V."/>
            <person name="Troukhan M.E."/>
            <person name="Alexandrov N.A."/>
            <person name="Lu Y.-P."/>
            <person name="Flavell R.B."/>
            <person name="Feldmann K.A."/>
        </authorList>
    </citation>
    <scope>NUCLEOTIDE SEQUENCE [LARGE SCALE MRNA]</scope>
</reference>
<reference key="6">
    <citation type="journal article" date="2012" name="Mol. Cell. Proteomics">
        <title>Comparative large-scale characterisation of plant vs. mammal proteins reveals similar and idiosyncratic N-alpha acetylation features.</title>
        <authorList>
            <person name="Bienvenut W.V."/>
            <person name="Sumpton D."/>
            <person name="Martinez A."/>
            <person name="Lilla S."/>
            <person name="Espagne C."/>
            <person name="Meinnel T."/>
            <person name="Giglione C."/>
        </authorList>
    </citation>
    <scope>ACETYLATION [LARGE SCALE ANALYSIS] AT SER-2</scope>
    <scope>CLEAVAGE OF INITIATOR METHIONINE [LARGE SCALE ANALYSIS]</scope>
    <scope>IDENTIFICATION BY MASS SPECTROMETRY [LARGE SCALE ANALYSIS]</scope>
</reference>
<gene>
    <name type="ordered locus">At1g06760</name>
    <name type="ORF">F4H5.15</name>
</gene>
<dbReference type="EMBL" id="X62458">
    <property type="protein sequence ID" value="CAA44314.1"/>
    <property type="molecule type" value="Genomic_DNA"/>
</dbReference>
<dbReference type="EMBL" id="X62456">
    <property type="protein sequence ID" value="CAA44312.1"/>
    <property type="molecule type" value="mRNA"/>
</dbReference>
<dbReference type="EMBL" id="AC011001">
    <property type="protein sequence ID" value="AAF63139.1"/>
    <property type="molecule type" value="Genomic_DNA"/>
</dbReference>
<dbReference type="EMBL" id="CP002684">
    <property type="protein sequence ID" value="AEE28032.1"/>
    <property type="molecule type" value="Genomic_DNA"/>
</dbReference>
<dbReference type="EMBL" id="AF428314">
    <property type="protein sequence ID" value="AAL16244.1"/>
    <property type="molecule type" value="mRNA"/>
</dbReference>
<dbReference type="EMBL" id="AY050452">
    <property type="protein sequence ID" value="AAK91467.1"/>
    <property type="molecule type" value="mRNA"/>
</dbReference>
<dbReference type="EMBL" id="AY097352">
    <property type="protein sequence ID" value="AAM19868.1"/>
    <property type="molecule type" value="mRNA"/>
</dbReference>
<dbReference type="EMBL" id="AY086374">
    <property type="protein sequence ID" value="AAM64441.1"/>
    <property type="molecule type" value="mRNA"/>
</dbReference>
<dbReference type="PIR" id="S19698">
    <property type="entry name" value="HSMU11"/>
</dbReference>
<dbReference type="RefSeq" id="NP_172161.1">
    <property type="nucleotide sequence ID" value="NM_100553.3"/>
</dbReference>
<dbReference type="SMR" id="P26568"/>
<dbReference type="BioGRID" id="22428">
    <property type="interactions" value="3"/>
</dbReference>
<dbReference type="FunCoup" id="P26568">
    <property type="interactions" value="116"/>
</dbReference>
<dbReference type="STRING" id="3702.P26568"/>
<dbReference type="iPTMnet" id="P26568"/>
<dbReference type="PaxDb" id="3702-AT1G06760.1"/>
<dbReference type="ProteomicsDB" id="247329"/>
<dbReference type="EnsemblPlants" id="AT1G06760.1">
    <property type="protein sequence ID" value="AT1G06760.1"/>
    <property type="gene ID" value="AT1G06760"/>
</dbReference>
<dbReference type="GeneID" id="837187"/>
<dbReference type="Gramene" id="AT1G06760.1">
    <property type="protein sequence ID" value="AT1G06760.1"/>
    <property type="gene ID" value="AT1G06760"/>
</dbReference>
<dbReference type="KEGG" id="ath:AT1G06760"/>
<dbReference type="Araport" id="AT1G06760"/>
<dbReference type="TAIR" id="AT1G06760">
    <property type="gene designation" value="H1.1"/>
</dbReference>
<dbReference type="eggNOG" id="ENOG502RXWQ">
    <property type="taxonomic scope" value="Eukaryota"/>
</dbReference>
<dbReference type="HOGENOM" id="CLU_052897_5_0_1"/>
<dbReference type="InParanoid" id="P26568"/>
<dbReference type="OMA" id="IKNHYKV"/>
<dbReference type="CD-CODE" id="4299E36E">
    <property type="entry name" value="Nucleolus"/>
</dbReference>
<dbReference type="PRO" id="PR:P26568"/>
<dbReference type="Proteomes" id="UP000006548">
    <property type="component" value="Chromosome 1"/>
</dbReference>
<dbReference type="ExpressionAtlas" id="P26568">
    <property type="expression patterns" value="baseline and differential"/>
</dbReference>
<dbReference type="GO" id="GO:0000786">
    <property type="term" value="C:nucleosome"/>
    <property type="evidence" value="ECO:0007669"/>
    <property type="project" value="InterPro"/>
</dbReference>
<dbReference type="GO" id="GO:0005634">
    <property type="term" value="C:nucleus"/>
    <property type="evidence" value="ECO:0007669"/>
    <property type="project" value="UniProtKB-SubCell"/>
</dbReference>
<dbReference type="GO" id="GO:0003677">
    <property type="term" value="F:DNA binding"/>
    <property type="evidence" value="ECO:0007669"/>
    <property type="project" value="UniProtKB-KW"/>
</dbReference>
<dbReference type="GO" id="GO:0030527">
    <property type="term" value="F:structural constituent of chromatin"/>
    <property type="evidence" value="ECO:0007669"/>
    <property type="project" value="InterPro"/>
</dbReference>
<dbReference type="GO" id="GO:0006334">
    <property type="term" value="P:nucleosome assembly"/>
    <property type="evidence" value="ECO:0007669"/>
    <property type="project" value="InterPro"/>
</dbReference>
<dbReference type="CDD" id="cd00073">
    <property type="entry name" value="H15"/>
    <property type="match status" value="1"/>
</dbReference>
<dbReference type="FunFam" id="1.10.10.10:FF:000521">
    <property type="entry name" value="Histone H1"/>
    <property type="match status" value="1"/>
</dbReference>
<dbReference type="Gene3D" id="1.10.10.10">
    <property type="entry name" value="Winged helix-like DNA-binding domain superfamily/Winged helix DNA-binding domain"/>
    <property type="match status" value="1"/>
</dbReference>
<dbReference type="InterPro" id="IPR005819">
    <property type="entry name" value="H1/H5"/>
</dbReference>
<dbReference type="InterPro" id="IPR005818">
    <property type="entry name" value="Histone_H1/H5_H15"/>
</dbReference>
<dbReference type="InterPro" id="IPR036388">
    <property type="entry name" value="WH-like_DNA-bd_sf"/>
</dbReference>
<dbReference type="InterPro" id="IPR036390">
    <property type="entry name" value="WH_DNA-bd_sf"/>
</dbReference>
<dbReference type="PANTHER" id="PTHR11467">
    <property type="entry name" value="HISTONE H1"/>
    <property type="match status" value="1"/>
</dbReference>
<dbReference type="PANTHER" id="PTHR11467:SF168">
    <property type="entry name" value="HISTONE H1.1"/>
    <property type="match status" value="1"/>
</dbReference>
<dbReference type="Pfam" id="PF00538">
    <property type="entry name" value="Linker_histone"/>
    <property type="match status" value="1"/>
</dbReference>
<dbReference type="PRINTS" id="PR00624">
    <property type="entry name" value="HISTONEH5"/>
</dbReference>
<dbReference type="SMART" id="SM00526">
    <property type="entry name" value="H15"/>
    <property type="match status" value="1"/>
</dbReference>
<dbReference type="SUPFAM" id="SSF46785">
    <property type="entry name" value="Winged helix' DNA-binding domain"/>
    <property type="match status" value="1"/>
</dbReference>
<dbReference type="PROSITE" id="PS51504">
    <property type="entry name" value="H15"/>
    <property type="match status" value="1"/>
</dbReference>
<name>H11_ARATH</name>
<organism>
    <name type="scientific">Arabidopsis thaliana</name>
    <name type="common">Mouse-ear cress</name>
    <dbReference type="NCBI Taxonomy" id="3702"/>
    <lineage>
        <taxon>Eukaryota</taxon>
        <taxon>Viridiplantae</taxon>
        <taxon>Streptophyta</taxon>
        <taxon>Embryophyta</taxon>
        <taxon>Tracheophyta</taxon>
        <taxon>Spermatophyta</taxon>
        <taxon>Magnoliopsida</taxon>
        <taxon>eudicotyledons</taxon>
        <taxon>Gunneridae</taxon>
        <taxon>Pentapetalae</taxon>
        <taxon>rosids</taxon>
        <taxon>malvids</taxon>
        <taxon>Brassicales</taxon>
        <taxon>Brassicaceae</taxon>
        <taxon>Camelineae</taxon>
        <taxon>Arabidopsis</taxon>
    </lineage>
</organism>
<keyword id="KW-0007">Acetylation</keyword>
<keyword id="KW-0158">Chromosome</keyword>
<keyword id="KW-0238">DNA-binding</keyword>
<keyword id="KW-1017">Isopeptide bond</keyword>
<keyword id="KW-0539">Nucleus</keyword>
<keyword id="KW-1185">Reference proteome</keyword>
<keyword id="KW-0832">Ubl conjugation</keyword>
<evidence type="ECO:0000250" key="1">
    <source>
        <dbReference type="UniProtKB" id="P26569"/>
    </source>
</evidence>
<evidence type="ECO:0000255" key="2">
    <source>
        <dbReference type="PROSITE-ProRule" id="PRU00837"/>
    </source>
</evidence>
<evidence type="ECO:0000256" key="3">
    <source>
        <dbReference type="SAM" id="MobiDB-lite"/>
    </source>
</evidence>
<evidence type="ECO:0007744" key="4">
    <source>
    </source>
</evidence>
<protein>
    <recommendedName>
        <fullName>Histone H1.1</fullName>
    </recommendedName>
</protein>
<sequence>MSEVEIENAATIEGNTAADAPVTDAAVEKKPAAKGRKTKNVKEVKEKKTVAAAPKKRTVSSHPTYEEMIKDAIVTLKERTGSSQYAIQKFIEEKRKELPPTFRKLLLLNLKRLVASGKLVKVKASFKLPSASAKASSPKAAAEKSAPAKKKPATVAVTKAKRKVAAASKAKKTIAVKPKTAAAKKVTAKAKAKPVPRATAAATKRKAVDAKPKAKARPAKAAKTAKVTSPAKKAVAATKKVATVATKKKTPVKKVVKPKTVKSPAKRASSRVKK</sequence>